<name>RNPH_SHIFL</name>
<organism>
    <name type="scientific">Shigella flexneri</name>
    <dbReference type="NCBI Taxonomy" id="623"/>
    <lineage>
        <taxon>Bacteria</taxon>
        <taxon>Pseudomonadati</taxon>
        <taxon>Pseudomonadota</taxon>
        <taxon>Gammaproteobacteria</taxon>
        <taxon>Enterobacterales</taxon>
        <taxon>Enterobacteriaceae</taxon>
        <taxon>Shigella</taxon>
    </lineage>
</organism>
<accession>Q83PN2</accession>
<accession>Q7UAZ9</accession>
<keyword id="KW-0548">Nucleotidyltransferase</keyword>
<keyword id="KW-1185">Reference proteome</keyword>
<keyword id="KW-0694">RNA-binding</keyword>
<keyword id="KW-0698">rRNA processing</keyword>
<keyword id="KW-0808">Transferase</keyword>
<keyword id="KW-0819">tRNA processing</keyword>
<keyword id="KW-0820">tRNA-binding</keyword>
<dbReference type="EC" id="2.7.7.56" evidence="1"/>
<dbReference type="EMBL" id="AE005674">
    <property type="protein sequence ID" value="AAN45129.2"/>
    <property type="molecule type" value="Genomic_DNA"/>
</dbReference>
<dbReference type="EMBL" id="AE014073">
    <property type="protein sequence ID" value="AAP19063.1"/>
    <property type="molecule type" value="Genomic_DNA"/>
</dbReference>
<dbReference type="RefSeq" id="NP_709422.2">
    <property type="nucleotide sequence ID" value="NC_004337.2"/>
</dbReference>
<dbReference type="RefSeq" id="WP_001247089.1">
    <property type="nucleotide sequence ID" value="NZ_WPGW01000042.1"/>
</dbReference>
<dbReference type="SMR" id="Q83PN2"/>
<dbReference type="STRING" id="198214.SF3682"/>
<dbReference type="PaxDb" id="198214-SF3682"/>
<dbReference type="GeneID" id="1026242"/>
<dbReference type="GeneID" id="75202212"/>
<dbReference type="KEGG" id="sfl:SF3682"/>
<dbReference type="KEGG" id="sfx:S4086"/>
<dbReference type="PATRIC" id="fig|198214.7.peg.4345"/>
<dbReference type="HOGENOM" id="CLU_050858_0_0_6"/>
<dbReference type="Proteomes" id="UP000001006">
    <property type="component" value="Chromosome"/>
</dbReference>
<dbReference type="Proteomes" id="UP000002673">
    <property type="component" value="Chromosome"/>
</dbReference>
<dbReference type="GO" id="GO:0000175">
    <property type="term" value="F:3'-5'-RNA exonuclease activity"/>
    <property type="evidence" value="ECO:0007669"/>
    <property type="project" value="UniProtKB-UniRule"/>
</dbReference>
<dbReference type="GO" id="GO:0000049">
    <property type="term" value="F:tRNA binding"/>
    <property type="evidence" value="ECO:0007669"/>
    <property type="project" value="UniProtKB-UniRule"/>
</dbReference>
<dbReference type="GO" id="GO:0009022">
    <property type="term" value="F:tRNA nucleotidyltransferase activity"/>
    <property type="evidence" value="ECO:0007669"/>
    <property type="project" value="UniProtKB-UniRule"/>
</dbReference>
<dbReference type="GO" id="GO:0016075">
    <property type="term" value="P:rRNA catabolic process"/>
    <property type="evidence" value="ECO:0007669"/>
    <property type="project" value="UniProtKB-UniRule"/>
</dbReference>
<dbReference type="GO" id="GO:0006364">
    <property type="term" value="P:rRNA processing"/>
    <property type="evidence" value="ECO:0007669"/>
    <property type="project" value="UniProtKB-KW"/>
</dbReference>
<dbReference type="GO" id="GO:0008033">
    <property type="term" value="P:tRNA processing"/>
    <property type="evidence" value="ECO:0007669"/>
    <property type="project" value="UniProtKB-UniRule"/>
</dbReference>
<dbReference type="CDD" id="cd11362">
    <property type="entry name" value="RNase_PH_bact"/>
    <property type="match status" value="1"/>
</dbReference>
<dbReference type="FunFam" id="3.30.230.70:FF:000003">
    <property type="entry name" value="Ribonuclease PH"/>
    <property type="match status" value="1"/>
</dbReference>
<dbReference type="Gene3D" id="3.30.230.70">
    <property type="entry name" value="GHMP Kinase, N-terminal domain"/>
    <property type="match status" value="1"/>
</dbReference>
<dbReference type="HAMAP" id="MF_00564">
    <property type="entry name" value="RNase_PH"/>
    <property type="match status" value="1"/>
</dbReference>
<dbReference type="InterPro" id="IPR001247">
    <property type="entry name" value="ExoRNase_PH_dom1"/>
</dbReference>
<dbReference type="InterPro" id="IPR015847">
    <property type="entry name" value="ExoRNase_PH_dom2"/>
</dbReference>
<dbReference type="InterPro" id="IPR036345">
    <property type="entry name" value="ExoRNase_PH_dom2_sf"/>
</dbReference>
<dbReference type="InterPro" id="IPR027408">
    <property type="entry name" value="PNPase/RNase_PH_dom_sf"/>
</dbReference>
<dbReference type="InterPro" id="IPR020568">
    <property type="entry name" value="Ribosomal_Su5_D2-typ_SF"/>
</dbReference>
<dbReference type="InterPro" id="IPR050080">
    <property type="entry name" value="RNase_PH"/>
</dbReference>
<dbReference type="InterPro" id="IPR002381">
    <property type="entry name" value="RNase_PH_bac-type"/>
</dbReference>
<dbReference type="InterPro" id="IPR018336">
    <property type="entry name" value="RNase_PH_CS"/>
</dbReference>
<dbReference type="NCBIfam" id="TIGR01966">
    <property type="entry name" value="RNasePH"/>
    <property type="match status" value="1"/>
</dbReference>
<dbReference type="PANTHER" id="PTHR11953">
    <property type="entry name" value="EXOSOME COMPLEX COMPONENT"/>
    <property type="match status" value="1"/>
</dbReference>
<dbReference type="PANTHER" id="PTHR11953:SF0">
    <property type="entry name" value="EXOSOME COMPLEX COMPONENT RRP41"/>
    <property type="match status" value="1"/>
</dbReference>
<dbReference type="Pfam" id="PF01138">
    <property type="entry name" value="RNase_PH"/>
    <property type="match status" value="1"/>
</dbReference>
<dbReference type="Pfam" id="PF03725">
    <property type="entry name" value="RNase_PH_C"/>
    <property type="match status" value="1"/>
</dbReference>
<dbReference type="SUPFAM" id="SSF55666">
    <property type="entry name" value="Ribonuclease PH domain 2-like"/>
    <property type="match status" value="1"/>
</dbReference>
<dbReference type="SUPFAM" id="SSF54211">
    <property type="entry name" value="Ribosomal protein S5 domain 2-like"/>
    <property type="match status" value="1"/>
</dbReference>
<dbReference type="PROSITE" id="PS01277">
    <property type="entry name" value="RIBONUCLEASE_PH"/>
    <property type="match status" value="1"/>
</dbReference>
<reference key="1">
    <citation type="journal article" date="2002" name="Nucleic Acids Res.">
        <title>Genome sequence of Shigella flexneri 2a: insights into pathogenicity through comparison with genomes of Escherichia coli K12 and O157.</title>
        <authorList>
            <person name="Jin Q."/>
            <person name="Yuan Z."/>
            <person name="Xu J."/>
            <person name="Wang Y."/>
            <person name="Shen Y."/>
            <person name="Lu W."/>
            <person name="Wang J."/>
            <person name="Liu H."/>
            <person name="Yang J."/>
            <person name="Yang F."/>
            <person name="Zhang X."/>
            <person name="Zhang J."/>
            <person name="Yang G."/>
            <person name="Wu H."/>
            <person name="Qu D."/>
            <person name="Dong J."/>
            <person name="Sun L."/>
            <person name="Xue Y."/>
            <person name="Zhao A."/>
            <person name="Gao Y."/>
            <person name="Zhu J."/>
            <person name="Kan B."/>
            <person name="Ding K."/>
            <person name="Chen S."/>
            <person name="Cheng H."/>
            <person name="Yao Z."/>
            <person name="He B."/>
            <person name="Chen R."/>
            <person name="Ma D."/>
            <person name="Qiang B."/>
            <person name="Wen Y."/>
            <person name="Hou Y."/>
            <person name="Yu J."/>
        </authorList>
    </citation>
    <scope>NUCLEOTIDE SEQUENCE [LARGE SCALE GENOMIC DNA]</scope>
    <source>
        <strain>301 / Serotype 2a</strain>
    </source>
</reference>
<reference key="2">
    <citation type="journal article" date="2003" name="Infect. Immun.">
        <title>Complete genome sequence and comparative genomics of Shigella flexneri serotype 2a strain 2457T.</title>
        <authorList>
            <person name="Wei J."/>
            <person name="Goldberg M.B."/>
            <person name="Burland V."/>
            <person name="Venkatesan M.M."/>
            <person name="Deng W."/>
            <person name="Fournier G."/>
            <person name="Mayhew G.F."/>
            <person name="Plunkett G. III"/>
            <person name="Rose D.J."/>
            <person name="Darling A."/>
            <person name="Mau B."/>
            <person name="Perna N.T."/>
            <person name="Payne S.M."/>
            <person name="Runyen-Janecky L.J."/>
            <person name="Zhou S."/>
            <person name="Schwartz D.C."/>
            <person name="Blattner F.R."/>
        </authorList>
    </citation>
    <scope>NUCLEOTIDE SEQUENCE [LARGE SCALE GENOMIC DNA]</scope>
    <source>
        <strain>ATCC 700930 / 2457T / Serotype 2a</strain>
    </source>
</reference>
<protein>
    <recommendedName>
        <fullName evidence="1">Ribonuclease PH</fullName>
        <shortName evidence="1">RNase PH</shortName>
        <ecNumber evidence="1">2.7.7.56</ecNumber>
    </recommendedName>
    <alternativeName>
        <fullName evidence="1">tRNA nucleotidyltransferase</fullName>
    </alternativeName>
</protein>
<comment type="function">
    <text evidence="1">Phosphorolytic 3'-5' exoribonuclease that plays an important role in tRNA 3'-end maturation. Removes nucleotide residues following the 3'-CCA terminus of tRNAs; can also add nucleotides to the ends of RNA molecules by using nucleoside diphosphates as substrates, but this may not be physiologically important. Probably plays a role in initiation of 16S rRNA degradation (leading to ribosome degradation) during starvation.</text>
</comment>
<comment type="catalytic activity">
    <reaction evidence="1">
        <text>tRNA(n+1) + phosphate = tRNA(n) + a ribonucleoside 5'-diphosphate</text>
        <dbReference type="Rhea" id="RHEA:10628"/>
        <dbReference type="Rhea" id="RHEA-COMP:17343"/>
        <dbReference type="Rhea" id="RHEA-COMP:17344"/>
        <dbReference type="ChEBI" id="CHEBI:43474"/>
        <dbReference type="ChEBI" id="CHEBI:57930"/>
        <dbReference type="ChEBI" id="CHEBI:173114"/>
        <dbReference type="EC" id="2.7.7.56"/>
    </reaction>
</comment>
<comment type="subunit">
    <text evidence="1">Homohexameric ring arranged as a trimer of dimers.</text>
</comment>
<comment type="similarity">
    <text evidence="1">Belongs to the RNase PH family.</text>
</comment>
<gene>
    <name evidence="1" type="primary">rph</name>
    <name type="ordered locus">SF3682</name>
    <name type="ordered locus">S4086</name>
</gene>
<sequence>MRPAGRSNNQVRPVTLTRNYTKHAEGSVLVEFGDTKVLCTASIEEGVPRFLKGQGQGWITAEYGMLPRSTHTRNAREAAKGKQGGRTMEIQRLIARALRAAVDLKALGEFTITLDCDVLQADGGTRTASITGACVALADALQKLVENGKLKTNPMKGMVAAVSVGIVNGEAICDLEYVEDSAAETDMNVVMTEDGRIIEVQGTAEGEPFTHEELLTLLALARGGIESIVATQKAALAN</sequence>
<proteinExistence type="inferred from homology"/>
<evidence type="ECO:0000255" key="1">
    <source>
        <dbReference type="HAMAP-Rule" id="MF_00564"/>
    </source>
</evidence>
<feature type="chain" id="PRO_0000139937" description="Ribonuclease PH">
    <location>
        <begin position="1"/>
        <end position="238"/>
    </location>
</feature>
<feature type="binding site" evidence="1">
    <location>
        <position position="86"/>
    </location>
    <ligand>
        <name>phosphate</name>
        <dbReference type="ChEBI" id="CHEBI:43474"/>
        <note>substrate</note>
    </ligand>
</feature>
<feature type="binding site" evidence="1">
    <location>
        <begin position="124"/>
        <end position="126"/>
    </location>
    <ligand>
        <name>phosphate</name>
        <dbReference type="ChEBI" id="CHEBI:43474"/>
        <note>substrate</note>
    </ligand>
</feature>